<dbReference type="EMBL" id="CP001283">
    <property type="protein sequence ID" value="ACK89681.1"/>
    <property type="molecule type" value="Genomic_DNA"/>
</dbReference>
<dbReference type="RefSeq" id="WP_001984764.1">
    <property type="nucleotide sequence ID" value="NC_011773.1"/>
</dbReference>
<dbReference type="SMR" id="B7JK11"/>
<dbReference type="GeneID" id="93007188"/>
<dbReference type="KEGG" id="bcu:BCAH820_3938"/>
<dbReference type="HOGENOM" id="CLU_129084_1_3_9"/>
<dbReference type="Proteomes" id="UP000001363">
    <property type="component" value="Chromosome"/>
</dbReference>
<dbReference type="GO" id="GO:0015934">
    <property type="term" value="C:large ribosomal subunit"/>
    <property type="evidence" value="ECO:0007669"/>
    <property type="project" value="InterPro"/>
</dbReference>
<dbReference type="GO" id="GO:0003735">
    <property type="term" value="F:structural constituent of ribosome"/>
    <property type="evidence" value="ECO:0007669"/>
    <property type="project" value="InterPro"/>
</dbReference>
<dbReference type="GO" id="GO:0006412">
    <property type="term" value="P:translation"/>
    <property type="evidence" value="ECO:0007669"/>
    <property type="project" value="UniProtKB-UniRule"/>
</dbReference>
<dbReference type="HAMAP" id="MF_00340">
    <property type="entry name" value="Ribosomal_bL32"/>
    <property type="match status" value="1"/>
</dbReference>
<dbReference type="InterPro" id="IPR002677">
    <property type="entry name" value="Ribosomal_bL32"/>
</dbReference>
<dbReference type="InterPro" id="IPR044957">
    <property type="entry name" value="Ribosomal_bL32_bact"/>
</dbReference>
<dbReference type="InterPro" id="IPR011332">
    <property type="entry name" value="Ribosomal_zn-bd"/>
</dbReference>
<dbReference type="NCBIfam" id="TIGR01031">
    <property type="entry name" value="rpmF_bact"/>
    <property type="match status" value="1"/>
</dbReference>
<dbReference type="PANTHER" id="PTHR35534">
    <property type="entry name" value="50S RIBOSOMAL PROTEIN L32"/>
    <property type="match status" value="1"/>
</dbReference>
<dbReference type="PANTHER" id="PTHR35534:SF2">
    <property type="entry name" value="LARGE RIBOSOMAL SUBUNIT PROTEIN BL32"/>
    <property type="match status" value="1"/>
</dbReference>
<dbReference type="Pfam" id="PF01783">
    <property type="entry name" value="Ribosomal_L32p"/>
    <property type="match status" value="1"/>
</dbReference>
<dbReference type="SUPFAM" id="SSF57829">
    <property type="entry name" value="Zn-binding ribosomal proteins"/>
    <property type="match status" value="1"/>
</dbReference>
<keyword id="KW-0687">Ribonucleoprotein</keyword>
<keyword id="KW-0689">Ribosomal protein</keyword>
<proteinExistence type="inferred from homology"/>
<sequence>MAVPFRRTSKTVKRKRRTHFKLSVPGMVECPSCGEAKLAHRVCKACGTYKGKEVISK</sequence>
<feature type="chain" id="PRO_1000120084" description="Large ribosomal subunit protein bL32">
    <location>
        <begin position="1"/>
        <end position="57"/>
    </location>
</feature>
<evidence type="ECO:0000255" key="1">
    <source>
        <dbReference type="HAMAP-Rule" id="MF_00340"/>
    </source>
</evidence>
<evidence type="ECO:0000305" key="2"/>
<protein>
    <recommendedName>
        <fullName evidence="1">Large ribosomal subunit protein bL32</fullName>
    </recommendedName>
    <alternativeName>
        <fullName evidence="2">50S ribosomal protein L32</fullName>
    </alternativeName>
</protein>
<reference key="1">
    <citation type="submission" date="2008-10" db="EMBL/GenBank/DDBJ databases">
        <title>Genome sequence of Bacillus cereus AH820.</title>
        <authorList>
            <person name="Dodson R.J."/>
            <person name="Durkin A.S."/>
            <person name="Rosovitz M.J."/>
            <person name="Rasko D.A."/>
            <person name="Hoffmaster A."/>
            <person name="Ravel J."/>
            <person name="Sutton G."/>
        </authorList>
    </citation>
    <scope>NUCLEOTIDE SEQUENCE [LARGE SCALE GENOMIC DNA]</scope>
    <source>
        <strain>AH820</strain>
    </source>
</reference>
<name>RL32_BACC0</name>
<comment type="similarity">
    <text evidence="1">Belongs to the bacterial ribosomal protein bL32 family.</text>
</comment>
<gene>
    <name evidence="1" type="primary">rpmF</name>
    <name type="ordered locus">BCAH820_3938</name>
</gene>
<organism>
    <name type="scientific">Bacillus cereus (strain AH820)</name>
    <dbReference type="NCBI Taxonomy" id="405535"/>
    <lineage>
        <taxon>Bacteria</taxon>
        <taxon>Bacillati</taxon>
        <taxon>Bacillota</taxon>
        <taxon>Bacilli</taxon>
        <taxon>Bacillales</taxon>
        <taxon>Bacillaceae</taxon>
        <taxon>Bacillus</taxon>
        <taxon>Bacillus cereus group</taxon>
    </lineage>
</organism>
<accession>B7JK11</accession>